<keyword id="KW-0004">4Fe-4S</keyword>
<keyword id="KW-0963">Cytoplasm</keyword>
<keyword id="KW-1015">Disulfide bond</keyword>
<keyword id="KW-0408">Iron</keyword>
<keyword id="KW-0411">Iron-sulfur</keyword>
<keyword id="KW-0479">Metal-binding</keyword>
<keyword id="KW-0489">Methyltransferase</keyword>
<keyword id="KW-1185">Reference proteome</keyword>
<keyword id="KW-0698">rRNA processing</keyword>
<keyword id="KW-0949">S-adenosyl-L-methionine</keyword>
<keyword id="KW-0808">Transferase</keyword>
<keyword id="KW-0819">tRNA processing</keyword>
<proteinExistence type="inferred from homology"/>
<protein>
    <recommendedName>
        <fullName evidence="1">Dual-specificity RNA methyltransferase RlmN</fullName>
        <ecNumber evidence="1">2.1.1.192</ecNumber>
    </recommendedName>
    <alternativeName>
        <fullName evidence="1">23S rRNA (adenine(2503)-C(2))-methyltransferase</fullName>
    </alternativeName>
    <alternativeName>
        <fullName evidence="1">23S rRNA m2A2503 methyltransferase</fullName>
    </alternativeName>
    <alternativeName>
        <fullName evidence="1">Ribosomal RNA large subunit methyltransferase N</fullName>
    </alternativeName>
    <alternativeName>
        <fullName evidence="1">tRNA (adenine(37)-C(2))-methyltransferase</fullName>
    </alternativeName>
    <alternativeName>
        <fullName evidence="1">tRNA m2A37 methyltransferase</fullName>
    </alternativeName>
</protein>
<name>RLMN_PASMU</name>
<accession>Q9CJJ8</accession>
<dbReference type="EC" id="2.1.1.192" evidence="1"/>
<dbReference type="EMBL" id="AE004439">
    <property type="protein sequence ID" value="AAK04091.1"/>
    <property type="molecule type" value="Genomic_DNA"/>
</dbReference>
<dbReference type="RefSeq" id="WP_010907446.1">
    <property type="nucleotide sequence ID" value="NC_002663.1"/>
</dbReference>
<dbReference type="SMR" id="Q9CJJ8"/>
<dbReference type="STRING" id="272843.PM2007"/>
<dbReference type="EnsemblBacteria" id="AAK04091">
    <property type="protein sequence ID" value="AAK04091"/>
    <property type="gene ID" value="PM2007"/>
</dbReference>
<dbReference type="KEGG" id="pmu:PM2007"/>
<dbReference type="HOGENOM" id="CLU_029101_0_0_6"/>
<dbReference type="OrthoDB" id="9793973at2"/>
<dbReference type="Proteomes" id="UP000000809">
    <property type="component" value="Chromosome"/>
</dbReference>
<dbReference type="GO" id="GO:0005737">
    <property type="term" value="C:cytoplasm"/>
    <property type="evidence" value="ECO:0007669"/>
    <property type="project" value="UniProtKB-SubCell"/>
</dbReference>
<dbReference type="GO" id="GO:0051539">
    <property type="term" value="F:4 iron, 4 sulfur cluster binding"/>
    <property type="evidence" value="ECO:0007669"/>
    <property type="project" value="UniProtKB-UniRule"/>
</dbReference>
<dbReference type="GO" id="GO:0046872">
    <property type="term" value="F:metal ion binding"/>
    <property type="evidence" value="ECO:0007669"/>
    <property type="project" value="UniProtKB-KW"/>
</dbReference>
<dbReference type="GO" id="GO:0070040">
    <property type="term" value="F:rRNA (adenine(2503)-C2-)-methyltransferase activity"/>
    <property type="evidence" value="ECO:0007669"/>
    <property type="project" value="UniProtKB-UniRule"/>
</dbReference>
<dbReference type="GO" id="GO:0019843">
    <property type="term" value="F:rRNA binding"/>
    <property type="evidence" value="ECO:0007669"/>
    <property type="project" value="UniProtKB-UniRule"/>
</dbReference>
<dbReference type="GO" id="GO:0002935">
    <property type="term" value="F:tRNA (adenine(37)-C2)-methyltransferase activity"/>
    <property type="evidence" value="ECO:0007669"/>
    <property type="project" value="UniProtKB-UniRule"/>
</dbReference>
<dbReference type="GO" id="GO:0000049">
    <property type="term" value="F:tRNA binding"/>
    <property type="evidence" value="ECO:0007669"/>
    <property type="project" value="UniProtKB-UniRule"/>
</dbReference>
<dbReference type="GO" id="GO:0070475">
    <property type="term" value="P:rRNA base methylation"/>
    <property type="evidence" value="ECO:0007669"/>
    <property type="project" value="UniProtKB-UniRule"/>
</dbReference>
<dbReference type="GO" id="GO:0030488">
    <property type="term" value="P:tRNA methylation"/>
    <property type="evidence" value="ECO:0007669"/>
    <property type="project" value="UniProtKB-UniRule"/>
</dbReference>
<dbReference type="CDD" id="cd01335">
    <property type="entry name" value="Radical_SAM"/>
    <property type="match status" value="1"/>
</dbReference>
<dbReference type="FunFam" id="1.10.150.530:FF:000003">
    <property type="entry name" value="Dual-specificity RNA methyltransferase RlmN"/>
    <property type="match status" value="1"/>
</dbReference>
<dbReference type="FunFam" id="3.20.20.70:FF:000008">
    <property type="entry name" value="Dual-specificity RNA methyltransferase RlmN"/>
    <property type="match status" value="1"/>
</dbReference>
<dbReference type="Gene3D" id="1.10.150.530">
    <property type="match status" value="1"/>
</dbReference>
<dbReference type="Gene3D" id="3.20.20.70">
    <property type="entry name" value="Aldolase class I"/>
    <property type="match status" value="1"/>
</dbReference>
<dbReference type="HAMAP" id="MF_01849">
    <property type="entry name" value="RNA_methyltr_RlmN"/>
    <property type="match status" value="1"/>
</dbReference>
<dbReference type="InterPro" id="IPR013785">
    <property type="entry name" value="Aldolase_TIM"/>
</dbReference>
<dbReference type="InterPro" id="IPR040072">
    <property type="entry name" value="Methyltransferase_A"/>
</dbReference>
<dbReference type="InterPro" id="IPR048641">
    <property type="entry name" value="RlmN_N"/>
</dbReference>
<dbReference type="InterPro" id="IPR027492">
    <property type="entry name" value="RNA_MTrfase_RlmN"/>
</dbReference>
<dbReference type="InterPro" id="IPR004383">
    <property type="entry name" value="rRNA_lsu_MTrfase_RlmN/Cfr"/>
</dbReference>
<dbReference type="InterPro" id="IPR007197">
    <property type="entry name" value="rSAM"/>
</dbReference>
<dbReference type="NCBIfam" id="NF008396">
    <property type="entry name" value="PRK11194.1"/>
    <property type="match status" value="1"/>
</dbReference>
<dbReference type="NCBIfam" id="TIGR00048">
    <property type="entry name" value="rRNA_mod_RlmN"/>
    <property type="match status" value="1"/>
</dbReference>
<dbReference type="PANTHER" id="PTHR30544">
    <property type="entry name" value="23S RRNA METHYLTRANSFERASE"/>
    <property type="match status" value="1"/>
</dbReference>
<dbReference type="PANTHER" id="PTHR30544:SF5">
    <property type="entry name" value="RADICAL SAM CORE DOMAIN-CONTAINING PROTEIN"/>
    <property type="match status" value="1"/>
</dbReference>
<dbReference type="Pfam" id="PF04055">
    <property type="entry name" value="Radical_SAM"/>
    <property type="match status" value="1"/>
</dbReference>
<dbReference type="Pfam" id="PF21016">
    <property type="entry name" value="RlmN_N"/>
    <property type="match status" value="1"/>
</dbReference>
<dbReference type="PIRSF" id="PIRSF006004">
    <property type="entry name" value="CHP00048"/>
    <property type="match status" value="1"/>
</dbReference>
<dbReference type="SFLD" id="SFLDF00275">
    <property type="entry name" value="adenosine_C2_methyltransferase"/>
    <property type="match status" value="1"/>
</dbReference>
<dbReference type="SFLD" id="SFLDG01062">
    <property type="entry name" value="methyltransferase_(Class_A)"/>
    <property type="match status" value="1"/>
</dbReference>
<dbReference type="SUPFAM" id="SSF102114">
    <property type="entry name" value="Radical SAM enzymes"/>
    <property type="match status" value="1"/>
</dbReference>
<dbReference type="PROSITE" id="PS51918">
    <property type="entry name" value="RADICAL_SAM"/>
    <property type="match status" value="1"/>
</dbReference>
<reference key="1">
    <citation type="journal article" date="2001" name="Proc. Natl. Acad. Sci. U.S.A.">
        <title>Complete genomic sequence of Pasteurella multocida Pm70.</title>
        <authorList>
            <person name="May B.J."/>
            <person name="Zhang Q."/>
            <person name="Li L.L."/>
            <person name="Paustian M.L."/>
            <person name="Whittam T.S."/>
            <person name="Kapur V."/>
        </authorList>
    </citation>
    <scope>NUCLEOTIDE SEQUENCE [LARGE SCALE GENOMIC DNA]</scope>
    <source>
        <strain>Pm70</strain>
    </source>
</reference>
<feature type="chain" id="PRO_0000350300" description="Dual-specificity RNA methyltransferase RlmN">
    <location>
        <begin position="1"/>
        <end position="394"/>
    </location>
</feature>
<feature type="domain" description="Radical SAM core" evidence="2">
    <location>
        <begin position="121"/>
        <end position="360"/>
    </location>
</feature>
<feature type="active site" description="Proton acceptor" evidence="1">
    <location>
        <position position="115"/>
    </location>
</feature>
<feature type="active site" description="S-methylcysteine intermediate" evidence="1">
    <location>
        <position position="365"/>
    </location>
</feature>
<feature type="binding site" evidence="1">
    <location>
        <position position="135"/>
    </location>
    <ligand>
        <name>[4Fe-4S] cluster</name>
        <dbReference type="ChEBI" id="CHEBI:49883"/>
        <note>4Fe-4S-S-AdoMet</note>
    </ligand>
</feature>
<feature type="binding site" evidence="1">
    <location>
        <position position="139"/>
    </location>
    <ligand>
        <name>[4Fe-4S] cluster</name>
        <dbReference type="ChEBI" id="CHEBI:49883"/>
        <note>4Fe-4S-S-AdoMet</note>
    </ligand>
</feature>
<feature type="binding site" evidence="1">
    <location>
        <position position="142"/>
    </location>
    <ligand>
        <name>[4Fe-4S] cluster</name>
        <dbReference type="ChEBI" id="CHEBI:49883"/>
        <note>4Fe-4S-S-AdoMet</note>
    </ligand>
</feature>
<feature type="binding site" evidence="1">
    <location>
        <begin position="189"/>
        <end position="190"/>
    </location>
    <ligand>
        <name>S-adenosyl-L-methionine</name>
        <dbReference type="ChEBI" id="CHEBI:59789"/>
    </ligand>
</feature>
<feature type="binding site" evidence="1">
    <location>
        <position position="221"/>
    </location>
    <ligand>
        <name>S-adenosyl-L-methionine</name>
        <dbReference type="ChEBI" id="CHEBI:59789"/>
    </ligand>
</feature>
<feature type="binding site" evidence="1">
    <location>
        <begin position="243"/>
        <end position="245"/>
    </location>
    <ligand>
        <name>S-adenosyl-L-methionine</name>
        <dbReference type="ChEBI" id="CHEBI:59789"/>
    </ligand>
</feature>
<feature type="binding site" evidence="1">
    <location>
        <position position="322"/>
    </location>
    <ligand>
        <name>S-adenosyl-L-methionine</name>
        <dbReference type="ChEBI" id="CHEBI:59789"/>
    </ligand>
</feature>
<feature type="disulfide bond" description="(transient)" evidence="1">
    <location>
        <begin position="128"/>
        <end position="365"/>
    </location>
</feature>
<comment type="function">
    <text evidence="1">Specifically methylates position 2 of adenine 2503 in 23S rRNA and position 2 of adenine 37 in tRNAs. m2A2503 modification seems to play a crucial role in the proofreading step occurring at the peptidyl transferase center and thus would serve to optimize ribosomal fidelity.</text>
</comment>
<comment type="catalytic activity">
    <reaction evidence="1">
        <text>adenosine(2503) in 23S rRNA + 2 reduced [2Fe-2S]-[ferredoxin] + 2 S-adenosyl-L-methionine = 2-methyladenosine(2503) in 23S rRNA + 5'-deoxyadenosine + L-methionine + 2 oxidized [2Fe-2S]-[ferredoxin] + S-adenosyl-L-homocysteine</text>
        <dbReference type="Rhea" id="RHEA:42916"/>
        <dbReference type="Rhea" id="RHEA-COMP:10000"/>
        <dbReference type="Rhea" id="RHEA-COMP:10001"/>
        <dbReference type="Rhea" id="RHEA-COMP:10152"/>
        <dbReference type="Rhea" id="RHEA-COMP:10282"/>
        <dbReference type="ChEBI" id="CHEBI:17319"/>
        <dbReference type="ChEBI" id="CHEBI:33737"/>
        <dbReference type="ChEBI" id="CHEBI:33738"/>
        <dbReference type="ChEBI" id="CHEBI:57844"/>
        <dbReference type="ChEBI" id="CHEBI:57856"/>
        <dbReference type="ChEBI" id="CHEBI:59789"/>
        <dbReference type="ChEBI" id="CHEBI:74411"/>
        <dbReference type="ChEBI" id="CHEBI:74497"/>
        <dbReference type="EC" id="2.1.1.192"/>
    </reaction>
</comment>
<comment type="catalytic activity">
    <reaction evidence="1">
        <text>adenosine(37) in tRNA + 2 reduced [2Fe-2S]-[ferredoxin] + 2 S-adenosyl-L-methionine = 2-methyladenosine(37) in tRNA + 5'-deoxyadenosine + L-methionine + 2 oxidized [2Fe-2S]-[ferredoxin] + S-adenosyl-L-homocysteine</text>
        <dbReference type="Rhea" id="RHEA:43332"/>
        <dbReference type="Rhea" id="RHEA-COMP:10000"/>
        <dbReference type="Rhea" id="RHEA-COMP:10001"/>
        <dbReference type="Rhea" id="RHEA-COMP:10162"/>
        <dbReference type="Rhea" id="RHEA-COMP:10485"/>
        <dbReference type="ChEBI" id="CHEBI:17319"/>
        <dbReference type="ChEBI" id="CHEBI:33737"/>
        <dbReference type="ChEBI" id="CHEBI:33738"/>
        <dbReference type="ChEBI" id="CHEBI:57844"/>
        <dbReference type="ChEBI" id="CHEBI:57856"/>
        <dbReference type="ChEBI" id="CHEBI:59789"/>
        <dbReference type="ChEBI" id="CHEBI:74411"/>
        <dbReference type="ChEBI" id="CHEBI:74497"/>
        <dbReference type="EC" id="2.1.1.192"/>
    </reaction>
</comment>
<comment type="cofactor">
    <cofactor evidence="1">
        <name>[4Fe-4S] cluster</name>
        <dbReference type="ChEBI" id="CHEBI:49883"/>
    </cofactor>
    <text evidence="1">Binds 1 [4Fe-4S] cluster. The cluster is coordinated with 3 cysteines and an exchangeable S-adenosyl-L-methionine.</text>
</comment>
<comment type="subcellular location">
    <subcellularLocation>
        <location evidence="1">Cytoplasm</location>
    </subcellularLocation>
</comment>
<comment type="miscellaneous">
    <text evidence="1">Reaction proceeds by a ping-pong mechanism involving intermediate methylation of a conserved cysteine residue.</text>
</comment>
<comment type="similarity">
    <text evidence="1">Belongs to the radical SAM superfamily. RlmN family.</text>
</comment>
<organism>
    <name type="scientific">Pasteurella multocida (strain Pm70)</name>
    <dbReference type="NCBI Taxonomy" id="272843"/>
    <lineage>
        <taxon>Bacteria</taxon>
        <taxon>Pseudomonadati</taxon>
        <taxon>Pseudomonadota</taxon>
        <taxon>Gammaproteobacteria</taxon>
        <taxon>Pasteurellales</taxon>
        <taxon>Pasteurellaceae</taxon>
        <taxon>Pasteurella</taxon>
    </lineage>
</organism>
<evidence type="ECO:0000255" key="1">
    <source>
        <dbReference type="HAMAP-Rule" id="MF_01849"/>
    </source>
</evidence>
<evidence type="ECO:0000255" key="2">
    <source>
        <dbReference type="PROSITE-ProRule" id="PRU01266"/>
    </source>
</evidence>
<sequence>MLEQQTCAEKAANTVNTVELSTDQAKKINLMNLTRQQMREFFKELGEKPFRADQLVKWIYHFGEDNFDNMTNINKKLRDKLKQVAEIKAPEVAVEQRSADGTIKWAMQVGDQQVETVYIPEADRATLCVSSQVGCALACTFCSTAQQGFNRNLTVSEIIGQVWRASKIIGNFGVTGVRPITNVVMMGMGEPLLNVANVVPAMEIMLDDFAYGLSKRRVTLSTSGVVPALDKLSEMIDVALAISLHAPNDELRDEIVPINKKYNIKMLMDSVNRYLSVSNANHGKVTIEYVMLDHVNDGVEHAHQLAQVLKNTPCKINLIPWNPFPEAPYAKSSNSRIDRFQKTLMEYGFTVIVRKTRGDDIDAACGQLAGDVIDRTKRTAQKKQFGQEIAVRNH</sequence>
<gene>
    <name evidence="1" type="primary">rlmN</name>
    <name type="ordered locus">PM2007</name>
</gene>